<proteinExistence type="inferred from homology"/>
<keyword id="KW-0997">Cell inner membrane</keyword>
<keyword id="KW-1003">Cell membrane</keyword>
<keyword id="KW-0472">Membrane</keyword>
<keyword id="KW-0520">NAD</keyword>
<keyword id="KW-0874">Quinone</keyword>
<keyword id="KW-1185">Reference proteome</keyword>
<keyword id="KW-1278">Translocase</keyword>
<keyword id="KW-0812">Transmembrane</keyword>
<keyword id="KW-1133">Transmembrane helix</keyword>
<keyword id="KW-0830">Ubiquinone</keyword>
<comment type="function">
    <text evidence="1">NDH-1 shuttles electrons from NADH, via FMN and iron-sulfur (Fe-S) centers, to quinones in the respiratory chain. The immediate electron acceptor for the enzyme in this species is believed to be ubiquinone. Couples the redox reaction to proton translocation (for every two electrons transferred, four hydrogen ions are translocated across the cytoplasmic membrane), and thus conserves the redox energy in a proton gradient. This subunit may bind ubiquinone.</text>
</comment>
<comment type="catalytic activity">
    <reaction evidence="1">
        <text>a quinone + NADH + 5 H(+)(in) = a quinol + NAD(+) + 4 H(+)(out)</text>
        <dbReference type="Rhea" id="RHEA:57888"/>
        <dbReference type="ChEBI" id="CHEBI:15378"/>
        <dbReference type="ChEBI" id="CHEBI:24646"/>
        <dbReference type="ChEBI" id="CHEBI:57540"/>
        <dbReference type="ChEBI" id="CHEBI:57945"/>
        <dbReference type="ChEBI" id="CHEBI:132124"/>
    </reaction>
</comment>
<comment type="subunit">
    <text evidence="1">NDH-1 is composed of 14 different subunits. Subunits NuoA, H, J, K, L, M, N constitute the membrane sector of the complex.</text>
</comment>
<comment type="subcellular location">
    <subcellularLocation>
        <location evidence="1">Cell inner membrane</location>
        <topology evidence="1">Multi-pass membrane protein</topology>
    </subcellularLocation>
</comment>
<comment type="similarity">
    <text evidence="1">Belongs to the complex I subunit 1 family.</text>
</comment>
<dbReference type="EC" id="7.1.1.-" evidence="1"/>
<dbReference type="EMBL" id="CP000010">
    <property type="protein sequence ID" value="AAU49828.1"/>
    <property type="molecule type" value="Genomic_DNA"/>
</dbReference>
<dbReference type="RefSeq" id="WP_004196426.1">
    <property type="nucleotide sequence ID" value="NC_006348.1"/>
</dbReference>
<dbReference type="RefSeq" id="YP_103427.1">
    <property type="nucleotide sequence ID" value="NC_006348.1"/>
</dbReference>
<dbReference type="SMR" id="Q62IP2"/>
<dbReference type="GeneID" id="93059701"/>
<dbReference type="KEGG" id="bma:BMA1822"/>
<dbReference type="PATRIC" id="fig|243160.12.peg.1860"/>
<dbReference type="eggNOG" id="COG1005">
    <property type="taxonomic scope" value="Bacteria"/>
</dbReference>
<dbReference type="HOGENOM" id="CLU_015134_0_1_4"/>
<dbReference type="Proteomes" id="UP000006693">
    <property type="component" value="Chromosome 1"/>
</dbReference>
<dbReference type="GO" id="GO:0005886">
    <property type="term" value="C:plasma membrane"/>
    <property type="evidence" value="ECO:0007669"/>
    <property type="project" value="UniProtKB-SubCell"/>
</dbReference>
<dbReference type="GO" id="GO:0003954">
    <property type="term" value="F:NADH dehydrogenase activity"/>
    <property type="evidence" value="ECO:0007669"/>
    <property type="project" value="TreeGrafter"/>
</dbReference>
<dbReference type="GO" id="GO:0016655">
    <property type="term" value="F:oxidoreductase activity, acting on NAD(P)H, quinone or similar compound as acceptor"/>
    <property type="evidence" value="ECO:0007669"/>
    <property type="project" value="UniProtKB-UniRule"/>
</dbReference>
<dbReference type="GO" id="GO:0048038">
    <property type="term" value="F:quinone binding"/>
    <property type="evidence" value="ECO:0007669"/>
    <property type="project" value="UniProtKB-KW"/>
</dbReference>
<dbReference type="GO" id="GO:0009060">
    <property type="term" value="P:aerobic respiration"/>
    <property type="evidence" value="ECO:0007669"/>
    <property type="project" value="TreeGrafter"/>
</dbReference>
<dbReference type="HAMAP" id="MF_01350">
    <property type="entry name" value="NDH1_NuoH"/>
    <property type="match status" value="1"/>
</dbReference>
<dbReference type="InterPro" id="IPR001694">
    <property type="entry name" value="NADH_UbQ_OxRdtase_su1/FPO"/>
</dbReference>
<dbReference type="InterPro" id="IPR018086">
    <property type="entry name" value="NADH_UbQ_OxRdtase_su1_CS"/>
</dbReference>
<dbReference type="NCBIfam" id="NF004741">
    <property type="entry name" value="PRK06076.1-2"/>
    <property type="match status" value="1"/>
</dbReference>
<dbReference type="NCBIfam" id="NF004742">
    <property type="entry name" value="PRK06076.1-3"/>
    <property type="match status" value="1"/>
</dbReference>
<dbReference type="PANTHER" id="PTHR11432">
    <property type="entry name" value="NADH DEHYDROGENASE SUBUNIT 1"/>
    <property type="match status" value="1"/>
</dbReference>
<dbReference type="PANTHER" id="PTHR11432:SF3">
    <property type="entry name" value="NADH-UBIQUINONE OXIDOREDUCTASE CHAIN 1"/>
    <property type="match status" value="1"/>
</dbReference>
<dbReference type="Pfam" id="PF00146">
    <property type="entry name" value="NADHdh"/>
    <property type="match status" value="1"/>
</dbReference>
<dbReference type="PROSITE" id="PS00668">
    <property type="entry name" value="COMPLEX1_ND1_2"/>
    <property type="match status" value="1"/>
</dbReference>
<protein>
    <recommendedName>
        <fullName evidence="1">NADH-quinone oxidoreductase subunit H</fullName>
        <ecNumber evidence="1">7.1.1.-</ecNumber>
    </recommendedName>
    <alternativeName>
        <fullName evidence="1">NADH dehydrogenase I subunit H</fullName>
    </alternativeName>
    <alternativeName>
        <fullName evidence="1">NDH-1 subunit H</fullName>
    </alternativeName>
</protein>
<organism>
    <name type="scientific">Burkholderia mallei (strain ATCC 23344)</name>
    <dbReference type="NCBI Taxonomy" id="243160"/>
    <lineage>
        <taxon>Bacteria</taxon>
        <taxon>Pseudomonadati</taxon>
        <taxon>Pseudomonadota</taxon>
        <taxon>Betaproteobacteria</taxon>
        <taxon>Burkholderiales</taxon>
        <taxon>Burkholderiaceae</taxon>
        <taxon>Burkholderia</taxon>
        <taxon>pseudomallei group</taxon>
    </lineage>
</organism>
<reference key="1">
    <citation type="journal article" date="2004" name="Proc. Natl. Acad. Sci. U.S.A.">
        <title>Structural flexibility in the Burkholderia mallei genome.</title>
        <authorList>
            <person name="Nierman W.C."/>
            <person name="DeShazer D."/>
            <person name="Kim H.S."/>
            <person name="Tettelin H."/>
            <person name="Nelson K.E."/>
            <person name="Feldblyum T.V."/>
            <person name="Ulrich R.L."/>
            <person name="Ronning C.M."/>
            <person name="Brinkac L.M."/>
            <person name="Daugherty S.C."/>
            <person name="Davidsen T.D."/>
            <person name="DeBoy R.T."/>
            <person name="Dimitrov G."/>
            <person name="Dodson R.J."/>
            <person name="Durkin A.S."/>
            <person name="Gwinn M.L."/>
            <person name="Haft D.H."/>
            <person name="Khouri H.M."/>
            <person name="Kolonay J.F."/>
            <person name="Madupu R."/>
            <person name="Mohammoud Y."/>
            <person name="Nelson W.C."/>
            <person name="Radune D."/>
            <person name="Romero C.M."/>
            <person name="Sarria S."/>
            <person name="Selengut J."/>
            <person name="Shamblin C."/>
            <person name="Sullivan S.A."/>
            <person name="White O."/>
            <person name="Yu Y."/>
            <person name="Zafar N."/>
            <person name="Zhou L."/>
            <person name="Fraser C.M."/>
        </authorList>
    </citation>
    <scope>NUCLEOTIDE SEQUENCE [LARGE SCALE GENOMIC DNA]</scope>
    <source>
        <strain>ATCC 23344</strain>
    </source>
</reference>
<feature type="chain" id="PRO_0000244905" description="NADH-quinone oxidoreductase subunit H">
    <location>
        <begin position="1"/>
        <end position="354"/>
    </location>
</feature>
<feature type="transmembrane region" description="Helical" evidence="1">
    <location>
        <begin position="25"/>
        <end position="45"/>
    </location>
</feature>
<feature type="transmembrane region" description="Helical" evidence="1">
    <location>
        <begin position="91"/>
        <end position="111"/>
    </location>
</feature>
<feature type="transmembrane region" description="Helical" evidence="1">
    <location>
        <begin position="126"/>
        <end position="146"/>
    </location>
</feature>
<feature type="transmembrane region" description="Helical" evidence="1">
    <location>
        <begin position="170"/>
        <end position="190"/>
    </location>
</feature>
<feature type="transmembrane region" description="Helical" evidence="1">
    <location>
        <begin position="205"/>
        <end position="225"/>
    </location>
</feature>
<feature type="transmembrane region" description="Helical" evidence="1">
    <location>
        <begin position="253"/>
        <end position="273"/>
    </location>
</feature>
<feature type="transmembrane region" description="Helical" evidence="1">
    <location>
        <begin position="290"/>
        <end position="310"/>
    </location>
</feature>
<feature type="transmembrane region" description="Helical" evidence="1">
    <location>
        <begin position="330"/>
        <end position="350"/>
    </location>
</feature>
<name>NUOH_BURMA</name>
<gene>
    <name evidence="1" type="primary">nuoH</name>
    <name type="ordered locus">BMA1822</name>
</gene>
<sequence>MSLFDTINSGGAQLLGVAWPTVWALVRILVVAVVILLCVAYLILWERKLIGWMHVRLGPNRVGPAGLLQPIADVLKLLLKEVIRPTAASRWLYLVAPVMTVVPAFAVWAVIPFQAGAVLANINAGLLYAMAISSIGVYAVILAGWASNSKYAFLGAMRAAAQMVSYEISMGFALVLVLMTAGSLNLSEIVGSQQHGFFAGHGVNFLSWNWLPLLPVFVIYFISGIAETNRHPFDVVEGESEIVAGHMIDYSGMAFALFFLAEYINMIVISALAATLFLGGWDAPFEFLSFIPGIFWLVLKIFALLSVFIWARATFPRYRYDQIMRLGWKVFLPVCVFWVIVVGFWMMSPLNIWK</sequence>
<evidence type="ECO:0000255" key="1">
    <source>
        <dbReference type="HAMAP-Rule" id="MF_01350"/>
    </source>
</evidence>
<accession>Q62IP2</accession>